<gene>
    <name evidence="5" type="primary">2</name>
</gene>
<keyword id="KW-0235">DNA replication</keyword>
<keyword id="KW-0238">DNA-binding</keyword>
<keyword id="KW-0239">DNA-directed DNA polymerase</keyword>
<keyword id="KW-0244">Early protein</keyword>
<keyword id="KW-0269">Exonuclease</keyword>
<keyword id="KW-0378">Hydrolase</keyword>
<keyword id="KW-0460">Magnesium</keyword>
<keyword id="KW-0479">Metal-binding</keyword>
<keyword id="KW-0540">Nuclease</keyword>
<keyword id="KW-0547">Nucleotide-binding</keyword>
<keyword id="KW-0548">Nucleotidyltransferase</keyword>
<keyword id="KW-1185">Reference proteome</keyword>
<keyword id="KW-0808">Transferase</keyword>
<keyword id="KW-1194">Viral DNA replication</keyword>
<sequence length="572" mass="66451">MSRKMFSCDFETTTKLDDCRVWAYGYMEIGNLDNYKIGNSLDEFMQWVMEIQADLYFHNLKFDGAFIVNWLEQHGFKWSNEGLPNTYNTIISKMGQWYMIDICFGYRGKRKLHTVIYDSLKKLPFPVKKIAKDFQLPLLKGDIDYHTERPVGHEITPEEYEYIKNDIEIIARALDIQFKQGLDRMTAGSDSLKGFKDILSTKKFNKVFPKLSLPMDKEIRKAYRGGFTWLNDKYKEKEIGEGMVFDVNSLYPSQMYSRPLPYGAPIVFQGKYEKDEQYPLYIQRIRFEFELKEGYIPTIQIKKNPFFKGNEYLKNSGVEPVELYLTNVDLELIQEHYELYNVEYIDGFKFREKTGLFKDFIDKWTYVKTHEEGAKKQLAKLMLNSLYGKFASNPDVTGKVPYLKDDGSLGFRVGDEEYKDPVYTPMGVFITAWARFTTITAAQACYDRIIYCDTDSIHLTGTEVPEIIKDIVDPKKLGYWAHESTFKRAKYLRQKTYIQDIYVKEVDGKLKECSPDEATTTKFSVKCAGMTDTIKKKVTFDNFAVGFSSMGKPKPVQVNGGVVLVDSVFTIK</sequence>
<comment type="function">
    <text evidence="1 2 3">Polymerase responsible for protein-primed viral DNA replication by strand displacement with high processivity and fidelity (By similarity). To start replication, the DNA polymerase forms a heterodimer with a free primer terminal protein (TP), recognizes the replication origins at both 5' ends of the linear chromosome, and initiates replication using as primer the OH-group of Ser-232 of the TP (PubMed:23110220). This polymerase possesses three enzymatic activities: DNA synthesis (polymerase), primer terminal protein (TP) deoxynucleotidylation, which is the formation of a covalent linkage (phosphoester) between the hydroxyl group of a specific serine residue in TP and 5'-dAMP, a reaction directed by the third T at the 3' end, and 3' to 5' exonuclease activity (PubMed:19011105, PubMed:23110220). Exonuclease activity has a proofreading purpose (By similarity). Since the polymerase initiates the replication on the third thymine, the TP-dAMP initiation product translocates backwards to recover the template information of the 2 terminal nucleotide (sliding back-mechanism) (PubMed:19011105, PubMed:23110220).</text>
</comment>
<comment type="catalytic activity">
    <reaction evidence="3">
        <text>DNA(n) + a 2'-deoxyribonucleoside 5'-triphosphate = DNA(n+1) + diphosphate</text>
        <dbReference type="Rhea" id="RHEA:22508"/>
        <dbReference type="Rhea" id="RHEA-COMP:17339"/>
        <dbReference type="Rhea" id="RHEA-COMP:17340"/>
        <dbReference type="ChEBI" id="CHEBI:33019"/>
        <dbReference type="ChEBI" id="CHEBI:61560"/>
        <dbReference type="ChEBI" id="CHEBI:173112"/>
        <dbReference type="EC" id="2.7.7.7"/>
    </reaction>
</comment>
<comment type="cofactor">
    <cofactor evidence="1">
        <name>Mg(2+)</name>
        <dbReference type="ChEBI" id="CHEBI:18420"/>
    </cofactor>
</comment>
<comment type="subunit">
    <text evidence="1">Interacts with the primer terminal protein; this interaction allows the initiation of TP-primed DNA replication at both viral DNA ends. Interacts with DNA.</text>
</comment>
<comment type="domain">
    <text evidence="1">The N-terminus contains the 3'-5' exonuclease activity and strand displacement ability. The C-terminus contains the protein-primed initiation, DNA polymerization and pyrophosphorolytic activities.</text>
</comment>
<comment type="miscellaneous">
    <text evidence="1">This DNA polymerase requires a protein as a primer.</text>
</comment>
<comment type="similarity">
    <text evidence="4">Belongs to the DNA polymerase type-B family.</text>
</comment>
<accession>B7SSM2</accession>
<organism>
    <name type="scientific">Bacillus phage Nf</name>
    <name type="common">Bacteriophage Nf</name>
    <dbReference type="NCBI Taxonomy" id="2992639"/>
    <lineage>
        <taxon>Viruses</taxon>
        <taxon>Duplodnaviria</taxon>
        <taxon>Heunggongvirae</taxon>
        <taxon>Uroviricota</taxon>
        <taxon>Caudoviricetes</taxon>
        <taxon>Salasmaviridae</taxon>
        <taxon>Picovirinae</taxon>
        <taxon>Beecentumtrevirus</taxon>
        <taxon>Beecentumtrevirus Nf</taxon>
    </lineage>
</organism>
<name>DPOL_BPNF</name>
<reference key="1">
    <citation type="journal article" date="2009" name="Environ. Microbiol.">
        <title>Different responses to Spo0A-mediated suppression of the related Bacillus subtilis phages Nf and phi29.</title>
        <authorList>
            <person name="Castilla-Llorente V."/>
            <person name="Salas M."/>
            <person name="Meijer W.J."/>
        </authorList>
    </citation>
    <scope>NUCLEOTIDE SEQUENCE [GENOMIC DNA]</scope>
</reference>
<reference key="2">
    <citation type="journal article" date="2008" name="Proc. Natl. Acad. Sci. U.S.A.">
        <title>Phage phi29 and Nf terminal protein-priming domain specifies the internal template nucleotide to initiate DNA replication.</title>
        <authorList>
            <person name="Longas E."/>
            <person name="Villar L."/>
            <person name="Lazaro J.M."/>
            <person name="de Vega M."/>
            <person name="Salas M."/>
        </authorList>
    </citation>
    <scope>FUNCTION</scope>
</reference>
<reference key="3">
    <citation type="journal article" date="2012" name="PLoS ONE">
        <title>The essential role of the 3' terminal template base in the first steps of protein-primed DNA replication.</title>
        <authorList>
            <person name="Rodriguez I."/>
            <person name="Longas E."/>
            <person name="de Vega M."/>
            <person name="Salas M."/>
        </authorList>
    </citation>
    <scope>CATALYTIC ACTIVITY</scope>
    <scope>FUNCTION</scope>
</reference>
<protein>
    <recommendedName>
        <fullName>DNA polymerase</fullName>
        <ecNumber evidence="3">2.7.7.7</ecNumber>
        <ecNumber evidence="1">3.1.11.-</ecNumber>
    </recommendedName>
    <alternativeName>
        <fullName evidence="4">Gene product 2</fullName>
        <shortName evidence="4">gp2</shortName>
    </alternativeName>
    <alternativeName>
        <fullName>Protein p2</fullName>
    </alternativeName>
</protein>
<organismHost>
    <name type="scientific">Bacillus subtilis</name>
    <dbReference type="NCBI Taxonomy" id="1423"/>
</organismHost>
<feature type="chain" id="PRO_0000436072" description="DNA polymerase">
    <location>
        <begin position="1"/>
        <end position="572"/>
    </location>
</feature>
<feature type="region of interest" description="3'-5' exonuclease and strand displacement activities" evidence="1">
    <location>
        <begin position="1"/>
        <end position="222"/>
    </location>
</feature>
<feature type="region of interest" description="Interaction with the primer terminal protein" evidence="1">
    <location>
        <begin position="56"/>
        <end position="66"/>
    </location>
</feature>
<feature type="region of interest" description="DNA-binding; Involved in the formation of a stable complex between TP and phi29 DNA polymerase" evidence="1">
    <location>
        <begin position="223"/>
        <end position="226"/>
    </location>
</feature>
<feature type="region of interest" description="Initiation, polymerization and pyrophosphorolytic activities" evidence="1">
    <location>
        <begin position="227"/>
        <end position="572"/>
    </location>
</feature>
<feature type="binding site" evidence="1">
    <location>
        <position position="142"/>
    </location>
    <ligand>
        <name>Mg(2+)</name>
        <dbReference type="ChEBI" id="CHEBI:18420"/>
        <label>1</label>
    </ligand>
</feature>
<feature type="binding site" evidence="1">
    <location>
        <position position="166"/>
    </location>
    <ligand>
        <name>Mg(2+)</name>
        <dbReference type="ChEBI" id="CHEBI:18420"/>
        <label>1</label>
    </ligand>
</feature>
<feature type="binding site" evidence="1">
    <location>
        <position position="246"/>
    </location>
    <ligand>
        <name>Mg(2+)</name>
        <dbReference type="ChEBI" id="CHEBI:18420"/>
        <label>2</label>
        <note>catalytic</note>
    </ligand>
</feature>
<feature type="binding site" evidence="1">
    <location>
        <position position="247"/>
    </location>
    <ligand>
        <name>Mg(2+)</name>
        <dbReference type="ChEBI" id="CHEBI:18420"/>
        <label>2</label>
        <note>catalytic</note>
    </ligand>
</feature>
<feature type="binding site" evidence="1">
    <location>
        <position position="251"/>
    </location>
    <ligand>
        <name>5-methyl-UTP</name>
        <dbReference type="ChEBI" id="CHEBI:63527"/>
    </ligand>
</feature>
<feature type="binding site" evidence="1">
    <location>
        <position position="368"/>
    </location>
    <ligand>
        <name>5-methyl-UTP</name>
        <dbReference type="ChEBI" id="CHEBI:63527"/>
    </ligand>
</feature>
<feature type="binding site" evidence="1">
    <location>
        <position position="380"/>
    </location>
    <ligand>
        <name>5-methyl-UTP</name>
        <dbReference type="ChEBI" id="CHEBI:63527"/>
    </ligand>
</feature>
<feature type="binding site" evidence="1">
    <location>
        <position position="453"/>
    </location>
    <ligand>
        <name>Mg(2+)</name>
        <dbReference type="ChEBI" id="CHEBI:18420"/>
        <label>2</label>
        <note>catalytic</note>
    </ligand>
</feature>
<feature type="binding site" evidence="1">
    <location>
        <position position="455"/>
    </location>
    <ligand>
        <name>5-methyl-UTP</name>
        <dbReference type="ChEBI" id="CHEBI:63527"/>
    </ligand>
</feature>
<feature type="binding site" evidence="1">
    <location>
        <position position="455"/>
    </location>
    <ligand>
        <name>Mg(2+)</name>
        <dbReference type="ChEBI" id="CHEBI:18420"/>
        <label>2</label>
        <note>catalytic</note>
    </ligand>
</feature>
<feature type="site" description="Essential for 3'-5' exonucleolysis" evidence="1">
    <location>
        <position position="9"/>
    </location>
</feature>
<feature type="site" description="Essential for 3'-5' exonucleolysis" evidence="1">
    <location>
        <position position="11"/>
    </location>
</feature>
<feature type="site" description="Essential for 3'-5' exonucleolysis" evidence="1">
    <location>
        <position position="62"/>
    </location>
</feature>
<feature type="site" description="Involved in binding template-primer structures" evidence="1">
    <location>
        <position position="90"/>
    </location>
</feature>
<feature type="site" description="Essential for 3'-5' exonucleolysis" evidence="1">
    <location>
        <position position="119"/>
    </location>
</feature>
<feature type="site" description="Essential for 3'-5' exonucleolysis" evidence="1">
    <location>
        <position position="120"/>
    </location>
</feature>
<feature type="site" description="Probably involved in binding template-primer structures" evidence="1">
    <location>
        <position position="249"/>
    </location>
</feature>
<feature type="site" description="Probably involved in nucleotide binding selection" evidence="1">
    <location>
        <position position="251"/>
    </location>
</feature>
<feature type="site" description="Probably involved in nucleotide binding selection" evidence="1">
    <location>
        <position position="380"/>
    </location>
</feature>
<feature type="site" description="Probably involved in binding template-primer structures" evidence="1">
    <location>
        <position position="384"/>
    </location>
</feature>
<feature type="site" description="Probably involved in nucleotide binding selection" evidence="1">
    <location>
        <position position="387"/>
    </location>
</feature>
<feature type="site" description="Probably involved in binding template-primer structures" evidence="1">
    <location>
        <position position="388"/>
    </location>
</feature>
<feature type="site" description="Probably involved in binding template-primer structures" evidence="1">
    <location>
        <position position="431"/>
    </location>
</feature>
<feature type="site" description="Probably involved in binding template-primer structures" evidence="1">
    <location>
        <position position="435"/>
    </location>
</feature>
<feature type="site" description="Probably involved in binding template-primer structures" evidence="1">
    <location>
        <position position="495"/>
    </location>
</feature>
<feature type="site" description="Probably involved in binding template-primer structures" evidence="1">
    <location>
        <position position="497"/>
    </location>
</feature>
<feature type="site" description="Stabilizes the primer-terminus at the polymerization active site and contributes to the coordination between the exonuclease and polymerazation activities" evidence="1">
    <location>
        <position position="526"/>
    </location>
</feature>
<evidence type="ECO:0000250" key="1">
    <source>
        <dbReference type="UniProtKB" id="P03680"/>
    </source>
</evidence>
<evidence type="ECO:0000269" key="2">
    <source>
    </source>
</evidence>
<evidence type="ECO:0000269" key="3">
    <source>
    </source>
</evidence>
<evidence type="ECO:0000305" key="4"/>
<evidence type="ECO:0000312" key="5">
    <source>
        <dbReference type="EMBL" id="ACH57069.1"/>
    </source>
</evidence>
<proteinExistence type="evidence at protein level"/>
<dbReference type="EC" id="2.7.7.7" evidence="3"/>
<dbReference type="EC" id="3.1.11.-" evidence="1"/>
<dbReference type="EMBL" id="EU622808">
    <property type="protein sequence ID" value="ACH57069.1"/>
    <property type="molecule type" value="Genomic_DNA"/>
</dbReference>
<dbReference type="RefSeq" id="YP_009910718.1">
    <property type="nucleotide sequence ID" value="NC_049976.1"/>
</dbReference>
<dbReference type="SMR" id="B7SSM2"/>
<dbReference type="GeneID" id="56239461"/>
<dbReference type="Proteomes" id="UP000000744">
    <property type="component" value="Segment"/>
</dbReference>
<dbReference type="GO" id="GO:0003677">
    <property type="term" value="F:DNA binding"/>
    <property type="evidence" value="ECO:0007669"/>
    <property type="project" value="UniProtKB-KW"/>
</dbReference>
<dbReference type="GO" id="GO:0003887">
    <property type="term" value="F:DNA-directed DNA polymerase activity"/>
    <property type="evidence" value="ECO:0007669"/>
    <property type="project" value="UniProtKB-KW"/>
</dbReference>
<dbReference type="GO" id="GO:0004527">
    <property type="term" value="F:exonuclease activity"/>
    <property type="evidence" value="ECO:0007669"/>
    <property type="project" value="UniProtKB-KW"/>
</dbReference>
<dbReference type="GO" id="GO:0046872">
    <property type="term" value="F:metal ion binding"/>
    <property type="evidence" value="ECO:0007669"/>
    <property type="project" value="UniProtKB-KW"/>
</dbReference>
<dbReference type="GO" id="GO:0001882">
    <property type="term" value="F:nucleoside binding"/>
    <property type="evidence" value="ECO:0007669"/>
    <property type="project" value="InterPro"/>
</dbReference>
<dbReference type="GO" id="GO:0000166">
    <property type="term" value="F:nucleotide binding"/>
    <property type="evidence" value="ECO:0007669"/>
    <property type="project" value="UniProtKB-KW"/>
</dbReference>
<dbReference type="GO" id="GO:0006260">
    <property type="term" value="P:DNA replication"/>
    <property type="evidence" value="ECO:0007669"/>
    <property type="project" value="UniProtKB-KW"/>
</dbReference>
<dbReference type="GO" id="GO:0039693">
    <property type="term" value="P:viral DNA genome replication"/>
    <property type="evidence" value="ECO:0007669"/>
    <property type="project" value="UniProtKB-KW"/>
</dbReference>
<dbReference type="Gene3D" id="4.10.80.20">
    <property type="entry name" value="DNA polymerase, domain 5"/>
    <property type="match status" value="1"/>
</dbReference>
<dbReference type="Gene3D" id="4.10.80.30">
    <property type="entry name" value="DNA polymerase, domain 6"/>
    <property type="match status" value="1"/>
</dbReference>
<dbReference type="Gene3D" id="1.10.287.690">
    <property type="entry name" value="Helix hairpin bin"/>
    <property type="match status" value="1"/>
</dbReference>
<dbReference type="Gene3D" id="3.90.1600.10">
    <property type="entry name" value="Palm domain of DNA polymerase"/>
    <property type="match status" value="1"/>
</dbReference>
<dbReference type="Gene3D" id="3.30.420.10">
    <property type="entry name" value="Ribonuclease H-like superfamily/Ribonuclease H"/>
    <property type="match status" value="1"/>
</dbReference>
<dbReference type="Gene3D" id="3.30.1770.10">
    <property type="entry name" value="TPR 1 domain of DNA polymerase"/>
    <property type="match status" value="1"/>
</dbReference>
<dbReference type="InterPro" id="IPR006172">
    <property type="entry name" value="DNA-dir_DNA_pol_B"/>
</dbReference>
<dbReference type="InterPro" id="IPR017964">
    <property type="entry name" value="DNA-dir_DNA_pol_B_CS"/>
</dbReference>
<dbReference type="InterPro" id="IPR004868">
    <property type="entry name" value="DNA-dir_DNA_pol_B_mt/vir"/>
</dbReference>
<dbReference type="InterPro" id="IPR014416">
    <property type="entry name" value="DNA-dir_DNA_polB_phi29_vir"/>
</dbReference>
<dbReference type="InterPro" id="IPR043502">
    <property type="entry name" value="DNA/RNA_pol_sf"/>
</dbReference>
<dbReference type="InterPro" id="IPR023211">
    <property type="entry name" value="DNA_pol_palm_dom_sf"/>
</dbReference>
<dbReference type="InterPro" id="IPR012337">
    <property type="entry name" value="RNaseH-like_sf"/>
</dbReference>
<dbReference type="InterPro" id="IPR036397">
    <property type="entry name" value="RNaseH_sf"/>
</dbReference>
<dbReference type="PANTHER" id="PTHR33568">
    <property type="entry name" value="DNA POLYMERASE"/>
    <property type="match status" value="1"/>
</dbReference>
<dbReference type="PANTHER" id="PTHR33568:SF3">
    <property type="entry name" value="DNA-DIRECTED DNA POLYMERASE"/>
    <property type="match status" value="1"/>
</dbReference>
<dbReference type="Pfam" id="PF03175">
    <property type="entry name" value="DNA_pol_B_2"/>
    <property type="match status" value="1"/>
</dbReference>
<dbReference type="PIRSF" id="PIRSF004178">
    <property type="entry name" value="Dpol_Bac_phage"/>
    <property type="match status" value="1"/>
</dbReference>
<dbReference type="PRINTS" id="PR00106">
    <property type="entry name" value="DNAPOLB"/>
</dbReference>
<dbReference type="SMART" id="SM00486">
    <property type="entry name" value="POLBc"/>
    <property type="match status" value="1"/>
</dbReference>
<dbReference type="SUPFAM" id="SSF56672">
    <property type="entry name" value="DNA/RNA polymerases"/>
    <property type="match status" value="1"/>
</dbReference>
<dbReference type="SUPFAM" id="SSF53098">
    <property type="entry name" value="Ribonuclease H-like"/>
    <property type="match status" value="1"/>
</dbReference>
<dbReference type="PROSITE" id="PS00116">
    <property type="entry name" value="DNA_POLYMERASE_B"/>
    <property type="match status" value="1"/>
</dbReference>